<sequence length="100" mass="11309">MSTGPTAATGSNRRLQQTQNQVDEVVDIMRVNVDKVLERDQKLSELDDRADALQAGASQFETSAAKLKRKYWWKNCKMWAIGITVLVIFIIIIIVWVVSS</sequence>
<keyword id="KW-0007">Acetylation</keyword>
<keyword id="KW-0175">Coiled coil</keyword>
<keyword id="KW-0903">Direct protein sequencing</keyword>
<keyword id="KW-0967">Endosome</keyword>
<keyword id="KW-1017">Isopeptide bond</keyword>
<keyword id="KW-0472">Membrane</keyword>
<keyword id="KW-0653">Protein transport</keyword>
<keyword id="KW-1267">Proteomics identification</keyword>
<keyword id="KW-1185">Reference proteome</keyword>
<keyword id="KW-0770">Synapse</keyword>
<keyword id="KW-0771">Synaptosome</keyword>
<keyword id="KW-0812">Transmembrane</keyword>
<keyword id="KW-1133">Transmembrane helix</keyword>
<keyword id="KW-0813">Transport</keyword>
<keyword id="KW-0832">Ubl conjugation</keyword>
<reference key="1">
    <citation type="journal article" date="1999" name="Blood">
        <title>Identification of a cellubrevin/vesicle associated membrane protein 3 homologue in human platelets.</title>
        <authorList>
            <person name="Bernstein A.M."/>
            <person name="Whiteheart S.W."/>
        </authorList>
    </citation>
    <scope>NUCLEOTIDE SEQUENCE [MRNA]</scope>
</reference>
<reference key="2">
    <citation type="submission" date="2003-05" db="EMBL/GenBank/DDBJ databases">
        <title>Cloning of human full-length CDSs in BD Creator(TM) system donor vector.</title>
        <authorList>
            <person name="Kalnine N."/>
            <person name="Chen X."/>
            <person name="Rolfs A."/>
            <person name="Halleck A."/>
            <person name="Hines L."/>
            <person name="Eisenstein S."/>
            <person name="Koundinya M."/>
            <person name="Raphael J."/>
            <person name="Moreira D."/>
            <person name="Kelley T."/>
            <person name="LaBaer J."/>
            <person name="Lin Y."/>
            <person name="Phelan M."/>
            <person name="Farmer A."/>
        </authorList>
    </citation>
    <scope>NUCLEOTIDE SEQUENCE [LARGE SCALE MRNA]</scope>
</reference>
<reference key="3">
    <citation type="journal article" date="2006" name="Nature">
        <title>The DNA sequence and biological annotation of human chromosome 1.</title>
        <authorList>
            <person name="Gregory S.G."/>
            <person name="Barlow K.F."/>
            <person name="McLay K.E."/>
            <person name="Kaul R."/>
            <person name="Swarbreck D."/>
            <person name="Dunham A."/>
            <person name="Scott C.E."/>
            <person name="Howe K.L."/>
            <person name="Woodfine K."/>
            <person name="Spencer C.C.A."/>
            <person name="Jones M.C."/>
            <person name="Gillson C."/>
            <person name="Searle S."/>
            <person name="Zhou Y."/>
            <person name="Kokocinski F."/>
            <person name="McDonald L."/>
            <person name="Evans R."/>
            <person name="Phillips K."/>
            <person name="Atkinson A."/>
            <person name="Cooper R."/>
            <person name="Jones C."/>
            <person name="Hall R.E."/>
            <person name="Andrews T.D."/>
            <person name="Lloyd C."/>
            <person name="Ainscough R."/>
            <person name="Almeida J.P."/>
            <person name="Ambrose K.D."/>
            <person name="Anderson F."/>
            <person name="Andrew R.W."/>
            <person name="Ashwell R.I.S."/>
            <person name="Aubin K."/>
            <person name="Babbage A.K."/>
            <person name="Bagguley C.L."/>
            <person name="Bailey J."/>
            <person name="Beasley H."/>
            <person name="Bethel G."/>
            <person name="Bird C.P."/>
            <person name="Bray-Allen S."/>
            <person name="Brown J.Y."/>
            <person name="Brown A.J."/>
            <person name="Buckley D."/>
            <person name="Burton J."/>
            <person name="Bye J."/>
            <person name="Carder C."/>
            <person name="Chapman J.C."/>
            <person name="Clark S.Y."/>
            <person name="Clarke G."/>
            <person name="Clee C."/>
            <person name="Cobley V."/>
            <person name="Collier R.E."/>
            <person name="Corby N."/>
            <person name="Coville G.J."/>
            <person name="Davies J."/>
            <person name="Deadman R."/>
            <person name="Dunn M."/>
            <person name="Earthrowl M."/>
            <person name="Ellington A.G."/>
            <person name="Errington H."/>
            <person name="Frankish A."/>
            <person name="Frankland J."/>
            <person name="French L."/>
            <person name="Garner P."/>
            <person name="Garnett J."/>
            <person name="Gay L."/>
            <person name="Ghori M.R.J."/>
            <person name="Gibson R."/>
            <person name="Gilby L.M."/>
            <person name="Gillett W."/>
            <person name="Glithero R.J."/>
            <person name="Grafham D.V."/>
            <person name="Griffiths C."/>
            <person name="Griffiths-Jones S."/>
            <person name="Grocock R."/>
            <person name="Hammond S."/>
            <person name="Harrison E.S.I."/>
            <person name="Hart E."/>
            <person name="Haugen E."/>
            <person name="Heath P.D."/>
            <person name="Holmes S."/>
            <person name="Holt K."/>
            <person name="Howden P.J."/>
            <person name="Hunt A.R."/>
            <person name="Hunt S.E."/>
            <person name="Hunter G."/>
            <person name="Isherwood J."/>
            <person name="James R."/>
            <person name="Johnson C."/>
            <person name="Johnson D."/>
            <person name="Joy A."/>
            <person name="Kay M."/>
            <person name="Kershaw J.K."/>
            <person name="Kibukawa M."/>
            <person name="Kimberley A.M."/>
            <person name="King A."/>
            <person name="Knights A.J."/>
            <person name="Lad H."/>
            <person name="Laird G."/>
            <person name="Lawlor S."/>
            <person name="Leongamornlert D.A."/>
            <person name="Lloyd D.M."/>
            <person name="Loveland J."/>
            <person name="Lovell J."/>
            <person name="Lush M.J."/>
            <person name="Lyne R."/>
            <person name="Martin S."/>
            <person name="Mashreghi-Mohammadi M."/>
            <person name="Matthews L."/>
            <person name="Matthews N.S.W."/>
            <person name="McLaren S."/>
            <person name="Milne S."/>
            <person name="Mistry S."/>
            <person name="Moore M.J.F."/>
            <person name="Nickerson T."/>
            <person name="O'Dell C.N."/>
            <person name="Oliver K."/>
            <person name="Palmeiri A."/>
            <person name="Palmer S.A."/>
            <person name="Parker A."/>
            <person name="Patel D."/>
            <person name="Pearce A.V."/>
            <person name="Peck A.I."/>
            <person name="Pelan S."/>
            <person name="Phelps K."/>
            <person name="Phillimore B.J."/>
            <person name="Plumb R."/>
            <person name="Rajan J."/>
            <person name="Raymond C."/>
            <person name="Rouse G."/>
            <person name="Saenphimmachak C."/>
            <person name="Sehra H.K."/>
            <person name="Sheridan E."/>
            <person name="Shownkeen R."/>
            <person name="Sims S."/>
            <person name="Skuce C.D."/>
            <person name="Smith M."/>
            <person name="Steward C."/>
            <person name="Subramanian S."/>
            <person name="Sycamore N."/>
            <person name="Tracey A."/>
            <person name="Tromans A."/>
            <person name="Van Helmond Z."/>
            <person name="Wall M."/>
            <person name="Wallis J.M."/>
            <person name="White S."/>
            <person name="Whitehead S.L."/>
            <person name="Wilkinson J.E."/>
            <person name="Willey D.L."/>
            <person name="Williams H."/>
            <person name="Wilming L."/>
            <person name="Wray P.W."/>
            <person name="Wu Z."/>
            <person name="Coulson A."/>
            <person name="Vaudin M."/>
            <person name="Sulston J.E."/>
            <person name="Durbin R.M."/>
            <person name="Hubbard T."/>
            <person name="Wooster R."/>
            <person name="Dunham I."/>
            <person name="Carter N.P."/>
            <person name="McVean G."/>
            <person name="Ross M.T."/>
            <person name="Harrow J."/>
            <person name="Olson M.V."/>
            <person name="Beck S."/>
            <person name="Rogers J."/>
            <person name="Bentley D.R."/>
        </authorList>
    </citation>
    <scope>NUCLEOTIDE SEQUENCE [LARGE SCALE GENOMIC DNA]</scope>
</reference>
<reference key="4">
    <citation type="journal article" date="2004" name="Genome Res.">
        <title>The status, quality, and expansion of the NIH full-length cDNA project: the Mammalian Gene Collection (MGC).</title>
        <authorList>
            <consortium name="The MGC Project Team"/>
        </authorList>
    </citation>
    <scope>NUCLEOTIDE SEQUENCE [LARGE SCALE MRNA]</scope>
    <source>
        <tissue>Kidney</tissue>
        <tissue>Urinary bladder</tissue>
    </source>
</reference>
<reference key="5">
    <citation type="journal article" date="2003" name="Nat. Biotechnol.">
        <title>Exploring proteomes and analyzing protein processing by mass spectrometric identification of sorted N-terminal peptides.</title>
        <authorList>
            <person name="Gevaert K."/>
            <person name="Goethals M."/>
            <person name="Martens L."/>
            <person name="Van Damme J."/>
            <person name="Staes A."/>
            <person name="Thomas G.R."/>
            <person name="Vandekerckhove J."/>
        </authorList>
    </citation>
    <scope>PROTEIN SEQUENCE OF 2-14</scope>
    <source>
        <tissue>Platelet</tissue>
    </source>
</reference>
<reference key="6">
    <citation type="journal article" date="2012" name="Microbiol. Immunol.">
        <title>Specificity of botulinum protease for human VAMP family proteins.</title>
        <authorList>
            <person name="Yamamoto H."/>
            <person name="Ida T."/>
            <person name="Tsutsuki H."/>
            <person name="Mori M."/>
            <person name="Matsumoto T."/>
            <person name="Kohda T."/>
            <person name="Mukamoto M."/>
            <person name="Goshima N."/>
            <person name="Kozaki S."/>
            <person name="Ihara H."/>
        </authorList>
    </citation>
    <scope>PROTEIN SEQUENCE OF 42-47 AND 60-64</scope>
    <scope>PROTEOLYTIC CLEAVAGE (MICROBIAL INFECTION) BY C.BOTULINUM NEUROTOXIN TYPES B; D AND F</scope>
</reference>
<reference key="7">
    <citation type="journal article" date="2008" name="J. Cell Biol.">
        <title>A syntaxin 10-SNARE complex distinguishes two distinct transport routes from endosomes to the trans-Golgi in human cells.</title>
        <authorList>
            <person name="Ganley I.G."/>
            <person name="Espinosa E."/>
            <person name="Pfeffer S.R."/>
        </authorList>
    </citation>
    <scope>FUNCTION</scope>
</reference>
<reference key="8">
    <citation type="journal article" date="2011" name="BMC Syst. Biol.">
        <title>Initial characterization of the human central proteome.</title>
        <authorList>
            <person name="Burkard T.R."/>
            <person name="Planyavsky M."/>
            <person name="Kaupe I."/>
            <person name="Breitwieser F.P."/>
            <person name="Buerckstuemmer T."/>
            <person name="Bennett K.L."/>
            <person name="Superti-Furga G."/>
            <person name="Colinge J."/>
        </authorList>
    </citation>
    <scope>IDENTIFICATION BY MASS SPECTROMETRY [LARGE SCALE ANALYSIS]</scope>
</reference>
<reference key="9">
    <citation type="journal article" date="2011" name="Cell">
        <title>The molecular basis for the endocytosis of small R-SNAREs by the clathrin adaptor CALM.</title>
        <authorList>
            <person name="Miller S.E."/>
            <person name="Sahlender D.A."/>
            <person name="Graham S.C."/>
            <person name="Honing S."/>
            <person name="Robinson M.S."/>
            <person name="Peden A.A."/>
            <person name="Owen D.J."/>
        </authorList>
    </citation>
    <scope>INTERACTION WITH PICALM</scope>
</reference>
<reference key="10">
    <citation type="journal article" date="2012" name="Proc. Natl. Acad. Sci. U.S.A.">
        <title>N-terminal acetylome analyses and functional insights of the N-terminal acetyltransferase NatB.</title>
        <authorList>
            <person name="Van Damme P."/>
            <person name="Lasa M."/>
            <person name="Polevoda B."/>
            <person name="Gazquez C."/>
            <person name="Elosegui-Artola A."/>
            <person name="Kim D.S."/>
            <person name="De Juan-Pardo E."/>
            <person name="Demeyer K."/>
            <person name="Hole K."/>
            <person name="Larrea E."/>
            <person name="Timmerman E."/>
            <person name="Prieto J."/>
            <person name="Arnesen T."/>
            <person name="Sherman F."/>
            <person name="Gevaert K."/>
            <person name="Aldabe R."/>
        </authorList>
    </citation>
    <scope>ACETYLATION [LARGE SCALE ANALYSIS] AT SER-2</scope>
    <scope>CLEAVAGE OF INITIATOR METHIONINE [LARGE SCALE ANALYSIS]</scope>
    <scope>IDENTIFICATION BY MASS SPECTROMETRY [LARGE SCALE ANALYSIS]</scope>
</reference>
<reference key="11">
    <citation type="journal article" date="2013" name="J. Proteome Res.">
        <title>Toward a comprehensive characterization of a human cancer cell phosphoproteome.</title>
        <authorList>
            <person name="Zhou H."/>
            <person name="Di Palma S."/>
            <person name="Preisinger C."/>
            <person name="Peng M."/>
            <person name="Polat A.N."/>
            <person name="Heck A.J."/>
            <person name="Mohammed S."/>
        </authorList>
    </citation>
    <scope>IDENTIFICATION BY MASS SPECTROMETRY [LARGE SCALE ANALYSIS]</scope>
    <source>
        <tissue>Cervix carcinoma</tissue>
        <tissue>Erythroleukemia</tissue>
    </source>
</reference>
<reference key="12">
    <citation type="journal article" date="2014" name="J. Proteomics">
        <title>An enzyme assisted RP-RPLC approach for in-depth analysis of human liver phosphoproteome.</title>
        <authorList>
            <person name="Bian Y."/>
            <person name="Song C."/>
            <person name="Cheng K."/>
            <person name="Dong M."/>
            <person name="Wang F."/>
            <person name="Huang J."/>
            <person name="Sun D."/>
            <person name="Wang L."/>
            <person name="Ye M."/>
            <person name="Zou H."/>
        </authorList>
    </citation>
    <scope>IDENTIFICATION BY MASS SPECTROMETRY [LARGE SCALE ANALYSIS]</scope>
    <source>
        <tissue>Liver</tissue>
    </source>
</reference>
<reference key="13">
    <citation type="journal article" date="2015" name="Proteomics">
        <title>N-terminome analysis of the human mitochondrial proteome.</title>
        <authorList>
            <person name="Vaca Jacome A.S."/>
            <person name="Rabilloud T."/>
            <person name="Schaeffer-Reiss C."/>
            <person name="Rompais M."/>
            <person name="Ayoub D."/>
            <person name="Lane L."/>
            <person name="Bairoch A."/>
            <person name="Van Dorsselaer A."/>
            <person name="Carapito C."/>
        </authorList>
    </citation>
    <scope>ACETYLATION [LARGE SCALE ANALYSIS] AT SER-2</scope>
    <scope>CLEAVAGE OF INITIATOR METHIONINE [LARGE SCALE ANALYSIS]</scope>
    <scope>IDENTIFICATION BY MASS SPECTROMETRY [LARGE SCALE ANALYSIS]</scope>
</reference>
<reference key="14">
    <citation type="journal article" date="2017" name="J. Cell Biol.">
        <title>BAIAP3, a C2 domain-containing Munc13 protein, controls the fate of dense-core vesicles in neuroendocrine cells.</title>
        <authorList>
            <person name="Zhang X."/>
            <person name="Jiang S."/>
            <person name="Mitok K.A."/>
            <person name="Li L."/>
            <person name="Attie A.D."/>
            <person name="Martin T.F.J."/>
        </authorList>
    </citation>
    <scope>INTERACTION WITH BAIAP3</scope>
</reference>
<reference key="15">
    <citation type="journal article" date="2013" name="EMBO J.">
        <title>Goliath family E3 ligases regulate the recycling endosome pathway via VAMP3 ubiquitylation.</title>
        <authorList>
            <person name="Yamazaki Y."/>
            <person name="Schoenherr C."/>
            <person name="Varshney G.K."/>
            <person name="Dogru M."/>
            <person name="Hallberg B."/>
            <person name="Palmer R.H."/>
        </authorList>
    </citation>
    <scope>SUBCELLULAR LOCATION</scope>
    <scope>UBIQUITINATION AT LYS-66; LYS-68 AND LYS-77</scope>
    <scope>MUTAGENESIS OF 66-LYS--LYS-68 AND LYS-77</scope>
</reference>
<organism>
    <name type="scientific">Homo sapiens</name>
    <name type="common">Human</name>
    <dbReference type="NCBI Taxonomy" id="9606"/>
    <lineage>
        <taxon>Eukaryota</taxon>
        <taxon>Metazoa</taxon>
        <taxon>Chordata</taxon>
        <taxon>Craniata</taxon>
        <taxon>Vertebrata</taxon>
        <taxon>Euteleostomi</taxon>
        <taxon>Mammalia</taxon>
        <taxon>Eutheria</taxon>
        <taxon>Euarchontoglires</taxon>
        <taxon>Primates</taxon>
        <taxon>Haplorrhini</taxon>
        <taxon>Catarrhini</taxon>
        <taxon>Hominidae</taxon>
        <taxon>Homo</taxon>
    </lineage>
</organism>
<comment type="function">
    <text evidence="5">SNARE involved in vesicular transport from the late endosomes to the trans-Golgi network.</text>
</comment>
<comment type="subunit">
    <text evidence="1 6 9">Interacts with POPDC1 (via the C-terminus cytoplasmic tail). Interacts with BCAP31; involved in VAMP3 export from the endoplasmic reticulum (By similarity). Interacts with BAIAP3; this interaction is increased in the presence of calcium (PubMed:28626000). Interacts with PICALM.</text>
</comment>
<comment type="interaction">
    <interactant intactId="EBI-722343">
        <id>Q15836</id>
    </interactant>
    <interactant intactId="EBI-12078468">
        <id>Q8IVF2-3</id>
        <label>AHNAK2</label>
    </interactant>
    <organismsDiffer>false</organismsDiffer>
    <experiments>3</experiments>
</comment>
<comment type="interaction">
    <interactant intactId="EBI-722343">
        <id>Q15836</id>
    </interactant>
    <interactant intactId="EBI-11957045">
        <id>Q9NVV5-2</id>
        <label>AIG1</label>
    </interactant>
    <organismsDiffer>false</organismsDiffer>
    <experiments>3</experiments>
</comment>
<comment type="interaction">
    <interactant intactId="EBI-722343">
        <id>Q15836</id>
    </interactant>
    <interactant intactId="EBI-13059134">
        <id>Q13520</id>
        <label>AQP6</label>
    </interactant>
    <organismsDiffer>false</organismsDiffer>
    <experiments>3</experiments>
</comment>
<comment type="interaction">
    <interactant intactId="EBI-722343">
        <id>Q15836</id>
    </interactant>
    <interactant intactId="EBI-11343438">
        <id>Q3SXY8</id>
        <label>ARL13B</label>
    </interactant>
    <organismsDiffer>false</organismsDiffer>
    <experiments>3</experiments>
</comment>
<comment type="interaction">
    <interactant intactId="EBI-722343">
        <id>Q15836</id>
    </interactant>
    <interactant intactId="EBI-747430">
        <id>Q9BXK5</id>
        <label>BCL2L13</label>
    </interactant>
    <organismsDiffer>false</organismsDiffer>
    <experiments>3</experiments>
</comment>
<comment type="interaction">
    <interactant intactId="EBI-722343">
        <id>Q15836</id>
    </interactant>
    <interactant intactId="EBI-700794">
        <id>Q13323</id>
        <label>BIK</label>
    </interactant>
    <organismsDiffer>false</organismsDiffer>
    <experiments>3</experiments>
</comment>
<comment type="interaction">
    <interactant intactId="EBI-722343">
        <id>Q15836</id>
    </interactant>
    <interactant intactId="EBI-11532900">
        <id>J3KQ12</id>
        <label>BSCL2</label>
    </interactant>
    <organismsDiffer>false</organismsDiffer>
    <experiments>3</experiments>
</comment>
<comment type="interaction">
    <interactant intactId="EBI-722343">
        <id>Q15836</id>
    </interactant>
    <interactant intactId="EBI-7996695">
        <id>Q8WZ55</id>
        <label>BSND</label>
    </interactant>
    <organismsDiffer>false</organismsDiffer>
    <experiments>3</experiments>
</comment>
<comment type="interaction">
    <interactant intactId="EBI-722343">
        <id>Q15836</id>
    </interactant>
    <interactant intactId="EBI-7797864">
        <id>P11912</id>
        <label>CD79A</label>
    </interactant>
    <organismsDiffer>false</organismsDiffer>
    <experiments>3</experiments>
</comment>
<comment type="interaction">
    <interactant intactId="EBI-722343">
        <id>Q15836</id>
    </interactant>
    <interactant intactId="EBI-752069">
        <id>Q9H5X1</id>
        <label>CIAO2A</label>
    </interactant>
    <organismsDiffer>false</organismsDiffer>
    <experiments>3</experiments>
</comment>
<comment type="interaction">
    <interactant intactId="EBI-722343">
        <id>Q15836</id>
    </interactant>
    <interactant intactId="EBI-740744">
        <id>O95471</id>
        <label>CLDN7</label>
    </interactant>
    <organismsDiffer>false</organismsDiffer>
    <experiments>3</experiments>
</comment>
<comment type="interaction">
    <interactant intactId="EBI-722343">
        <id>Q15836</id>
    </interactant>
    <interactant intactId="EBI-17710733">
        <id>Q86T13</id>
        <label>CLEC14A</label>
    </interactant>
    <organismsDiffer>false</organismsDiffer>
    <experiments>3</experiments>
</comment>
<comment type="interaction">
    <interactant intactId="EBI-722343">
        <id>Q15836</id>
    </interactant>
    <interactant intactId="EBI-372265">
        <id>P21964</id>
        <label>COMT</label>
    </interactant>
    <organismsDiffer>false</organismsDiffer>
    <experiments>3</experiments>
</comment>
<comment type="interaction">
    <interactant intactId="EBI-722343">
        <id>Q15836</id>
    </interactant>
    <interactant intactId="EBI-3915253">
        <id>Q15125</id>
        <label>EBP</label>
    </interactant>
    <organismsDiffer>false</organismsDiffer>
    <experiments>3</experiments>
</comment>
<comment type="interaction">
    <interactant intactId="EBI-722343">
        <id>Q15836</id>
    </interactant>
    <interactant intactId="EBI-18535450">
        <id>Q9GZR5</id>
        <label>ELOVL4</label>
    </interactant>
    <organismsDiffer>false</organismsDiffer>
    <experiments>3</experiments>
</comment>
<comment type="interaction">
    <interactant intactId="EBI-722343">
        <id>Q15836</id>
    </interactant>
    <interactant intactId="EBI-3907816">
        <id>P54852</id>
        <label>EMP3</label>
    </interactant>
    <organismsDiffer>false</organismsDiffer>
    <experiments>3</experiments>
</comment>
<comment type="interaction">
    <interactant intactId="EBI-722343">
        <id>Q15836</id>
    </interactant>
    <interactant intactId="EBI-781551">
        <id>Q9Y282</id>
        <label>ERGIC3</label>
    </interactant>
    <organismsDiffer>false</organismsDiffer>
    <experiments>3</experiments>
</comment>
<comment type="interaction">
    <interactant intactId="EBI-722343">
        <id>Q15836</id>
    </interactant>
    <interactant intactId="EBI-18636064">
        <id>Q8TBP5</id>
        <label>FAM174A</label>
    </interactant>
    <organismsDiffer>false</organismsDiffer>
    <experiments>3</experiments>
</comment>
<comment type="interaction">
    <interactant intactId="EBI-722343">
        <id>Q15836</id>
    </interactant>
    <interactant intactId="EBI-18304435">
        <id>Q5JX71</id>
        <label>FAM209A</label>
    </interactant>
    <organismsDiffer>false</organismsDiffer>
    <experiments>3</experiments>
</comment>
<comment type="interaction">
    <interactant intactId="EBI-722343">
        <id>Q15836</id>
    </interactant>
    <interactant intactId="EBI-18938272">
        <id>Q96KR6</id>
        <label>FAM210B</label>
    </interactant>
    <organismsDiffer>false</organismsDiffer>
    <experiments>3</experiments>
</comment>
<comment type="interaction">
    <interactant intactId="EBI-722343">
        <id>Q15836</id>
    </interactant>
    <interactant intactId="EBI-3917143">
        <id>Q5T7V8</id>
        <label>GORAB</label>
    </interactant>
    <organismsDiffer>false</organismsDiffer>
    <experiments>3</experiments>
</comment>
<comment type="interaction">
    <interactant intactId="EBI-722343">
        <id>Q15836</id>
    </interactant>
    <interactant intactId="EBI-11721746">
        <id>Q8TED1</id>
        <label>GPX8</label>
    </interactant>
    <organismsDiffer>false</organismsDiffer>
    <experiments>3</experiments>
</comment>
<comment type="interaction">
    <interactant intactId="EBI-722343">
        <id>Q15836</id>
    </interactant>
    <interactant intactId="EBI-399080">
        <id>Q92993</id>
        <label>KAT5</label>
    </interactant>
    <organismsDiffer>false</organismsDiffer>
    <experiments>3</experiments>
</comment>
<comment type="interaction">
    <interactant intactId="EBI-722343">
        <id>Q15836</id>
    </interactant>
    <interactant intactId="EBI-3934936">
        <id>O95279</id>
        <label>KCNK5</label>
    </interactant>
    <organismsDiffer>false</organismsDiffer>
    <experiments>3</experiments>
</comment>
<comment type="interaction">
    <interactant intactId="EBI-722343">
        <id>Q15836</id>
    </interactant>
    <interactant intactId="EBI-2820517">
        <id>Q8TAF8</id>
        <label>LHFPL5</label>
    </interactant>
    <organismsDiffer>false</organismsDiffer>
    <experiments>3</experiments>
</comment>
<comment type="interaction">
    <interactant intactId="EBI-722343">
        <id>Q15836</id>
    </interactant>
    <interactant intactId="EBI-11742507">
        <id>Q8TAP4-4</id>
        <label>LMO3</label>
    </interactant>
    <organismsDiffer>false</organismsDiffer>
    <experiments>3</experiments>
</comment>
<comment type="interaction">
    <interactant intactId="EBI-722343">
        <id>Q15836</id>
    </interactant>
    <interactant intactId="EBI-11324706">
        <id>Q99735</id>
        <label>MGST2</label>
    </interactant>
    <organismsDiffer>false</organismsDiffer>
    <experiments>3</experiments>
</comment>
<comment type="interaction">
    <interactant intactId="EBI-722343">
        <id>Q15836</id>
    </interactant>
    <interactant intactId="EBI-724754">
        <id>O14880</id>
        <label>MGST3</label>
    </interactant>
    <organismsDiffer>false</organismsDiffer>
    <experiments>3</experiments>
</comment>
<comment type="interaction">
    <interactant intactId="EBI-722343">
        <id>Q15836</id>
    </interactant>
    <interactant intactId="EBI-10969203">
        <id>O14524-2</id>
        <label>NEMP1</label>
    </interactant>
    <organismsDiffer>false</organismsDiffer>
    <experiments>3</experiments>
</comment>
<comment type="interaction">
    <interactant intactId="EBI-722343">
        <id>Q15836</id>
    </interactant>
    <interactant intactId="EBI-716063">
        <id>Q13113</id>
        <label>PDZK1IP1</label>
    </interactant>
    <organismsDiffer>false</organismsDiffer>
    <experiments>3</experiments>
</comment>
<comment type="interaction">
    <interactant intactId="EBI-722343">
        <id>Q15836</id>
    </interactant>
    <interactant intactId="EBI-949945">
        <id>Q53GL0</id>
        <label>PLEKHO1</label>
    </interactant>
    <organismsDiffer>false</organismsDiffer>
    <experiments>3</experiments>
</comment>
<comment type="interaction">
    <interactant intactId="EBI-722343">
        <id>Q15836</id>
    </interactant>
    <interactant intactId="EBI-11161398">
        <id>O14684</id>
        <label>PTGES</label>
    </interactant>
    <organismsDiffer>false</organismsDiffer>
    <experiments>3</experiments>
</comment>
<comment type="interaction">
    <interactant intactId="EBI-722343">
        <id>Q15836</id>
    </interactant>
    <interactant intactId="EBI-10192441">
        <id>Q86VR2</id>
        <label>RETREG3</label>
    </interactant>
    <organismsDiffer>false</organismsDiffer>
    <experiments>3</experiments>
</comment>
<comment type="interaction">
    <interactant intactId="EBI-722343">
        <id>Q15836</id>
    </interactant>
    <interactant intactId="EBI-1056589">
        <id>Q96TC7</id>
        <label>RMDN3</label>
    </interactant>
    <organismsDiffer>false</organismsDiffer>
    <experiments>3</experiments>
</comment>
<comment type="interaction">
    <interactant intactId="EBI-722343">
        <id>Q15836</id>
    </interactant>
    <interactant intactId="EBI-3920694">
        <id>Q9NR31</id>
        <label>SAR1A</label>
    </interactant>
    <organismsDiffer>false</organismsDiffer>
    <experiments>3</experiments>
</comment>
<comment type="interaction">
    <interactant intactId="EBI-722343">
        <id>Q15836</id>
    </interactant>
    <interactant intactId="EBI-17247926">
        <id>Q9NY72</id>
        <label>SCN3B</label>
    </interactant>
    <organismsDiffer>false</organismsDiffer>
    <experiments>3</experiments>
</comment>
<comment type="interaction">
    <interactant intactId="EBI-722343">
        <id>Q15836</id>
    </interactant>
    <interactant intactId="EBI-9090795">
        <id>Q15047-2</id>
        <label>SETDB1</label>
    </interactant>
    <organismsDiffer>false</organismsDiffer>
    <experiments>3</experiments>
</comment>
<comment type="interaction">
    <interactant intactId="EBI-722343">
        <id>Q15836</id>
    </interactant>
    <interactant intactId="EBI-3923031">
        <id>Q14973</id>
        <label>SLC10A1</label>
    </interactant>
    <organismsDiffer>false</organismsDiffer>
    <experiments>3</experiments>
</comment>
<comment type="interaction">
    <interactant intactId="EBI-722343">
        <id>Q15836</id>
    </interactant>
    <interactant intactId="EBI-745000">
        <id>O00161</id>
        <label>SNAP23</label>
    </interactant>
    <organismsDiffer>false</organismsDiffer>
    <experiments>3</experiments>
</comment>
<comment type="interaction">
    <interactant intactId="EBI-722343">
        <id>Q15836</id>
    </interactant>
    <interactant intactId="EBI-490676">
        <id>O95721</id>
        <label>SNAP29</label>
    </interactant>
    <organismsDiffer>false</organismsDiffer>
    <experiments>5</experiments>
</comment>
<comment type="interaction">
    <interactant intactId="EBI-722343">
        <id>Q15836</id>
    </interactant>
    <interactant intactId="EBI-712466">
        <id>Q16623</id>
        <label>STX1A</label>
    </interactant>
    <organismsDiffer>false</organismsDiffer>
    <experiments>3</experiments>
</comment>
<comment type="interaction">
    <interactant intactId="EBI-722343">
        <id>Q15836</id>
    </interactant>
    <interactant intactId="EBI-11956649">
        <id>P32856-2</id>
        <label>STX2</label>
    </interactant>
    <organismsDiffer>false</organismsDiffer>
    <experiments>3</experiments>
</comment>
<comment type="interaction">
    <interactant intactId="EBI-722343">
        <id>Q15836</id>
    </interactant>
    <interactant intactId="EBI-744942">
        <id>Q12846</id>
        <label>STX4</label>
    </interactant>
    <organismsDiffer>false</organismsDiffer>
    <experiments>10</experiments>
</comment>
<comment type="interaction">
    <interactant intactId="EBI-722343">
        <id>Q15836</id>
    </interactant>
    <interactant intactId="EBI-6448756">
        <id>Q96DZ7</id>
        <label>TM4SF19</label>
    </interactant>
    <organismsDiffer>false</organismsDiffer>
    <experiments>3</experiments>
</comment>
<comment type="interaction">
    <interactant intactId="EBI-722343">
        <id>Q15836</id>
    </interactant>
    <interactant intactId="EBI-1805798">
        <id>Q53R12</id>
        <label>TM4SF20</label>
    </interactant>
    <organismsDiffer>false</organismsDiffer>
    <experiments>3</experiments>
</comment>
<comment type="interaction">
    <interactant intactId="EBI-722343">
        <id>Q15836</id>
    </interactant>
    <interactant intactId="EBI-10982110">
        <id>Q96Q45-2</id>
        <label>TMEM237</label>
    </interactant>
    <organismsDiffer>false</organismsDiffer>
    <experiments>3</experiments>
</comment>
<comment type="interaction">
    <interactant intactId="EBI-722343">
        <id>Q15836</id>
    </interactant>
    <interactant intactId="EBI-11722971">
        <id>Q53FP2</id>
        <label>TMEM35A</label>
    </interactant>
    <organismsDiffer>false</organismsDiffer>
    <experiments>3</experiments>
</comment>
<comment type="interaction">
    <interactant intactId="EBI-722343">
        <id>Q15836</id>
    </interactant>
    <interactant intactId="EBI-18178701">
        <id>Q4KMG9</id>
        <label>TMEM52B</label>
    </interactant>
    <organismsDiffer>false</organismsDiffer>
    <experiments>3</experiments>
</comment>
<comment type="interaction">
    <interactant intactId="EBI-722343">
        <id>Q15836</id>
    </interactant>
    <interactant intactId="EBI-2548832">
        <id>Q8N661</id>
        <label>TMEM86B</label>
    </interactant>
    <organismsDiffer>false</organismsDiffer>
    <experiments>3</experiments>
</comment>
<comment type="interaction">
    <interactant intactId="EBI-722343">
        <id>Q15836</id>
    </interactant>
    <interactant intactId="EBI-11724433">
        <id>Q6ZT21</id>
        <label>TMPPE</label>
    </interactant>
    <organismsDiffer>false</organismsDiffer>
    <experiments>3</experiments>
</comment>
<comment type="interaction">
    <interactant intactId="EBI-722343">
        <id>Q15836</id>
    </interactant>
    <interactant intactId="EBI-6447886">
        <id>Q9Y320</id>
        <label>TMX2</label>
    </interactant>
    <organismsDiffer>false</organismsDiffer>
    <experiments>3</experiments>
</comment>
<comment type="interaction">
    <interactant intactId="EBI-722343">
        <id>Q15836</id>
    </interactant>
    <interactant intactId="EBI-11750035">
        <id>O43915</id>
        <label>VEGFD</label>
    </interactant>
    <organismsDiffer>false</organismsDiffer>
    <experiments>4</experiments>
</comment>
<comment type="interaction">
    <interactant intactId="EBI-722343">
        <id>Q15836</id>
    </interactant>
    <interactant intactId="EBI-744988">
        <id>Q9H7M9</id>
        <label>VSIR</label>
    </interactant>
    <organismsDiffer>false</organismsDiffer>
    <experiments>3</experiments>
</comment>
<comment type="interaction">
    <interactant intactId="EBI-722343">
        <id>Q15836</id>
    </interactant>
    <interactant intactId="EBI-359832">
        <id>P61981</id>
        <label>YWHAG</label>
    </interactant>
    <organismsDiffer>false</organismsDiffer>
    <experiments>3</experiments>
</comment>
<comment type="interaction">
    <interactant intactId="EBI-722343">
        <id>Q15836</id>
    </interactant>
    <interactant intactId="EBI-915601">
        <id>O55012</id>
        <label>Picalm</label>
    </interactant>
    <organismsDiffer>true</organismsDiffer>
    <experiments>2</experiments>
</comment>
<comment type="subcellular location">
    <subcellularLocation>
        <location evidence="8">Early endosome membrane</location>
        <topology evidence="2">Single-pass type IV membrane protein</topology>
    </subcellularLocation>
    <subcellularLocation>
        <location evidence="8">Recycling endosome membrane</location>
        <topology evidence="2">Single-pass type IV membrane protein</topology>
    </subcellularLocation>
    <subcellularLocation>
        <location evidence="11">Synapse</location>
        <location evidence="11">Synaptosome</location>
    </subcellularLocation>
</comment>
<comment type="PTM">
    <text evidence="8">Ubiquitinated by RNF167 at Lys-66, Lys-68 and Lys-77, regulating the recycling endosome pathway.</text>
</comment>
<comment type="PTM">
    <text evidence="7">(Microbial infection) Targeted and hydrolyzed by C.botulinum neurotoxin type B (BoNT/B, botB) which hydrolyzes the 59-Gln-|-Phe-60 bond and probably inhibits neurotransmitter release (PubMed:22289120).</text>
</comment>
<comment type="PTM">
    <text evidence="7 11">(Microbial infection) Targeted and hydrolyzed by C.botulinum neurotoxin type D (BoNT/D, botD) which hydrolyzes the 42-Lys-|-Leu-43 bond and probably inhibits neurotransmitter release (PubMed:22289120). Note that humans are not known to be infected by C.botulinum type D.</text>
</comment>
<comment type="PTM">
    <text evidence="7">(Microbial infection) Targeted and hydrolyzed by C.botulinum neurotoxin type F (BoNT/F, botF) which hydrolyzes the 41-Gln-|-Lys-42 bond and probably inhibits neurotransmitter release (PubMed:22289120).</text>
</comment>
<comment type="similarity">
    <text evidence="11">Belongs to the synaptobrevin family.</text>
</comment>
<proteinExistence type="evidence at protein level"/>
<evidence type="ECO:0000250" key="1">
    <source>
        <dbReference type="UniProtKB" id="P63024"/>
    </source>
</evidence>
<evidence type="ECO:0000255" key="2"/>
<evidence type="ECO:0000255" key="3">
    <source>
        <dbReference type="PROSITE-ProRule" id="PRU00290"/>
    </source>
</evidence>
<evidence type="ECO:0000269" key="4">
    <source>
    </source>
</evidence>
<evidence type="ECO:0000269" key="5">
    <source>
    </source>
</evidence>
<evidence type="ECO:0000269" key="6">
    <source>
    </source>
</evidence>
<evidence type="ECO:0000269" key="7">
    <source>
    </source>
</evidence>
<evidence type="ECO:0000269" key="8">
    <source>
    </source>
</evidence>
<evidence type="ECO:0000269" key="9">
    <source>
    </source>
</evidence>
<evidence type="ECO:0000303" key="10">
    <source>
    </source>
</evidence>
<evidence type="ECO:0000305" key="11"/>
<evidence type="ECO:0007744" key="12">
    <source>
    </source>
</evidence>
<evidence type="ECO:0007744" key="13">
    <source>
    </source>
</evidence>
<accession>Q15836</accession>
<accession>Q9BRV4</accession>
<feature type="initiator methionine" description="Removed" evidence="4 12 13">
    <location>
        <position position="1"/>
    </location>
</feature>
<feature type="chain" id="PRO_0000206728" description="Vesicle-associated membrane protein 3">
    <location>
        <begin position="2"/>
        <end position="100"/>
    </location>
</feature>
<feature type="topological domain" description="Cytoplasmic" evidence="2">
    <location>
        <begin position="2"/>
        <end position="77"/>
    </location>
</feature>
<feature type="transmembrane region" description="Helical; Anchor for type IV membrane protein" evidence="2">
    <location>
        <begin position="78"/>
        <end position="98"/>
    </location>
</feature>
<feature type="topological domain" description="Vesicular" evidence="2">
    <location>
        <begin position="99"/>
        <end position="100"/>
    </location>
</feature>
<feature type="domain" description="v-SNARE coiled-coil homology" evidence="3">
    <location>
        <begin position="14"/>
        <end position="74"/>
    </location>
</feature>
<feature type="site" description="(Microbial infection) Cleavage; by C.botulinum neurotoxin type F (BoNT/F, botF)" evidence="7">
    <location>
        <begin position="41"/>
        <end position="42"/>
    </location>
</feature>
<feature type="site" description="(Microbial infection) Cleavage; by C.botulinum neurotoxin type D (BoNT/D, botD)" evidence="7">
    <location>
        <begin position="42"/>
        <end position="43"/>
    </location>
</feature>
<feature type="site" description="(Microbial infection) Cleavage; by C.botulinum neurotoxin type B (BoNT/B, botB)" evidence="7">
    <location>
        <begin position="58"/>
        <end position="59"/>
    </location>
</feature>
<feature type="modified residue" description="N-acetylserine" evidence="12 13">
    <location>
        <position position="2"/>
    </location>
</feature>
<feature type="cross-link" description="Glycyl lysine isopeptide (Lys-Gly) (interchain with G-Cter in ubiquitin)" evidence="8">
    <location>
        <position position="66"/>
    </location>
</feature>
<feature type="cross-link" description="Glycyl lysine isopeptide (Lys-Gly) (interchain with G-Cter in ubiquitin)" evidence="8">
    <location>
        <position position="68"/>
    </location>
</feature>
<feature type="cross-link" description="Glycyl lysine isopeptide (Lys-Gly) (interchain with G-Cter in ubiquitin)" evidence="8">
    <location>
        <position position="77"/>
    </location>
</feature>
<feature type="mutagenesis site" description="Abolished ubiquitination by RNF167; when associated with R-77." evidence="8">
    <original>KLK</original>
    <variation>RLR</variation>
    <location>
        <begin position="66"/>
        <end position="68"/>
    </location>
</feature>
<feature type="mutagenesis site" description="Abolished ubiquitination by RNF167; when associated with 66-R--R-68." evidence="8">
    <original>K</original>
    <variation>R</variation>
    <location>
        <position position="77"/>
    </location>
</feature>
<feature type="sequence conflict" description="In Ref. 3; AAH05941." evidence="11" ref="3">
    <original>K</original>
    <variation>E</variation>
    <location>
        <position position="77"/>
    </location>
</feature>
<dbReference type="EMBL" id="U64520">
    <property type="protein sequence ID" value="AAB05814.1"/>
    <property type="molecule type" value="mRNA"/>
</dbReference>
<dbReference type="EMBL" id="BT007327">
    <property type="protein sequence ID" value="AAP35991.1"/>
    <property type="molecule type" value="mRNA"/>
</dbReference>
<dbReference type="EMBL" id="Z98884">
    <property type="status" value="NOT_ANNOTATED_CDS"/>
    <property type="molecule type" value="Genomic_DNA"/>
</dbReference>
<dbReference type="EMBL" id="BC003570">
    <property type="protein sequence ID" value="AAH03570.1"/>
    <property type="molecule type" value="mRNA"/>
</dbReference>
<dbReference type="EMBL" id="BC005941">
    <property type="protein sequence ID" value="AAH05941.1"/>
    <property type="molecule type" value="mRNA"/>
</dbReference>
<dbReference type="EMBL" id="BC007050">
    <property type="protein sequence ID" value="AAH07050.1"/>
    <property type="molecule type" value="mRNA"/>
</dbReference>
<dbReference type="CCDS" id="CCDS88.1"/>
<dbReference type="RefSeq" id="NP_004772.1">
    <property type="nucleotide sequence ID" value="NM_004781.4"/>
</dbReference>
<dbReference type="SMR" id="Q15836"/>
<dbReference type="BioGRID" id="114747">
    <property type="interactions" value="328"/>
</dbReference>
<dbReference type="CORUM" id="Q15836"/>
<dbReference type="DIP" id="DIP-56422N"/>
<dbReference type="FunCoup" id="Q15836">
    <property type="interactions" value="2553"/>
</dbReference>
<dbReference type="IntAct" id="Q15836">
    <property type="interactions" value="246"/>
</dbReference>
<dbReference type="MINT" id="Q15836"/>
<dbReference type="STRING" id="9606.ENSP00000054666"/>
<dbReference type="TCDB" id="1.F.1.1.5">
    <property type="family name" value="the synaptosomal vesicle fusion pore (svf-pore) family"/>
</dbReference>
<dbReference type="GlyGen" id="Q15836">
    <property type="glycosylation" value="2 sites, 1 O-linked glycan (1 site)"/>
</dbReference>
<dbReference type="iPTMnet" id="Q15836"/>
<dbReference type="MetOSite" id="Q15836"/>
<dbReference type="PhosphoSitePlus" id="Q15836"/>
<dbReference type="SwissPalm" id="Q15836"/>
<dbReference type="BioMuta" id="VAMP3"/>
<dbReference type="DMDM" id="2501082"/>
<dbReference type="jPOST" id="Q15836"/>
<dbReference type="MassIVE" id="Q15836"/>
<dbReference type="PaxDb" id="9606-ENSP00000054666"/>
<dbReference type="PeptideAtlas" id="Q15836"/>
<dbReference type="ProteomicsDB" id="60786"/>
<dbReference type="Pumba" id="Q15836"/>
<dbReference type="TopDownProteomics" id="Q15836"/>
<dbReference type="Antibodypedia" id="27516">
    <property type="antibodies" value="275 antibodies from 31 providers"/>
</dbReference>
<dbReference type="DNASU" id="9341"/>
<dbReference type="Ensembl" id="ENST00000054666.11">
    <property type="protein sequence ID" value="ENSP00000054666.6"/>
    <property type="gene ID" value="ENSG00000049245.13"/>
</dbReference>
<dbReference type="GeneID" id="9341"/>
<dbReference type="KEGG" id="hsa:9341"/>
<dbReference type="MANE-Select" id="ENST00000054666.11">
    <property type="protein sequence ID" value="ENSP00000054666.6"/>
    <property type="RefSeq nucleotide sequence ID" value="NM_004781.4"/>
    <property type="RefSeq protein sequence ID" value="NP_004772.1"/>
</dbReference>
<dbReference type="AGR" id="HGNC:12644"/>
<dbReference type="CTD" id="9341"/>
<dbReference type="DisGeNET" id="9341"/>
<dbReference type="GeneCards" id="VAMP3"/>
<dbReference type="HGNC" id="HGNC:12644">
    <property type="gene designation" value="VAMP3"/>
</dbReference>
<dbReference type="HPA" id="ENSG00000049245">
    <property type="expression patterns" value="Low tissue specificity"/>
</dbReference>
<dbReference type="MIM" id="603657">
    <property type="type" value="gene"/>
</dbReference>
<dbReference type="neXtProt" id="NX_Q15836"/>
<dbReference type="OpenTargets" id="ENSG00000049245"/>
<dbReference type="PharmGKB" id="PA37268"/>
<dbReference type="VEuPathDB" id="HostDB:ENSG00000049245"/>
<dbReference type="eggNOG" id="KOG0860">
    <property type="taxonomic scope" value="Eukaryota"/>
</dbReference>
<dbReference type="GeneTree" id="ENSGT00940000158192"/>
<dbReference type="HOGENOM" id="CLU_064620_4_1_1"/>
<dbReference type="InParanoid" id="Q15836"/>
<dbReference type="OMA" id="EVEQKMW"/>
<dbReference type="OrthoDB" id="10042941at2759"/>
<dbReference type="PAN-GO" id="Q15836">
    <property type="GO annotations" value="6 GO annotations based on evolutionary models"/>
</dbReference>
<dbReference type="PhylomeDB" id="Q15836"/>
<dbReference type="TreeFam" id="TF313666"/>
<dbReference type="PathwayCommons" id="Q15836"/>
<dbReference type="Reactome" id="R-HSA-1236974">
    <property type="pathway name" value="ER-Phagosome pathway"/>
</dbReference>
<dbReference type="Reactome" id="R-HSA-6811440">
    <property type="pathway name" value="Retrograde transport at the Trans-Golgi-Network"/>
</dbReference>
<dbReference type="Reactome" id="R-HSA-8856825">
    <property type="pathway name" value="Cargo recognition for clathrin-mediated endocytosis"/>
</dbReference>
<dbReference type="Reactome" id="R-HSA-8856828">
    <property type="pathway name" value="Clathrin-mediated endocytosis"/>
</dbReference>
<dbReference type="Reactome" id="R-HSA-8980692">
    <property type="pathway name" value="RHOA GTPase cycle"/>
</dbReference>
<dbReference type="Reactome" id="R-HSA-9013026">
    <property type="pathway name" value="RHOB GTPase cycle"/>
</dbReference>
<dbReference type="Reactome" id="R-HSA-9013106">
    <property type="pathway name" value="RHOC GTPase cycle"/>
</dbReference>
<dbReference type="Reactome" id="R-HSA-9013148">
    <property type="pathway name" value="CDC42 GTPase cycle"/>
</dbReference>
<dbReference type="Reactome" id="R-HSA-9013149">
    <property type="pathway name" value="RAC1 GTPase cycle"/>
</dbReference>
<dbReference type="Reactome" id="R-HSA-9013404">
    <property type="pathway name" value="RAC2 GTPase cycle"/>
</dbReference>
<dbReference type="Reactome" id="R-HSA-9013405">
    <property type="pathway name" value="RHOD GTPase cycle"/>
</dbReference>
<dbReference type="Reactome" id="R-HSA-9013406">
    <property type="pathway name" value="RHOQ GTPase cycle"/>
</dbReference>
<dbReference type="Reactome" id="R-HSA-9013407">
    <property type="pathway name" value="RHOH GTPase cycle"/>
</dbReference>
<dbReference type="Reactome" id="R-HSA-9013408">
    <property type="pathway name" value="RHOG GTPase cycle"/>
</dbReference>
<dbReference type="Reactome" id="R-HSA-9013409">
    <property type="pathway name" value="RHOJ GTPase cycle"/>
</dbReference>
<dbReference type="Reactome" id="R-HSA-9013423">
    <property type="pathway name" value="RAC3 GTPase cycle"/>
</dbReference>
<dbReference type="Reactome" id="R-HSA-9035034">
    <property type="pathway name" value="RHOF GTPase cycle"/>
</dbReference>
<dbReference type="SignaLink" id="Q15836"/>
<dbReference type="SIGNOR" id="Q15836"/>
<dbReference type="BioGRID-ORCS" id="9341">
    <property type="hits" value="12 hits in 1154 CRISPR screens"/>
</dbReference>
<dbReference type="CD-CODE" id="FB4E32DD">
    <property type="entry name" value="Presynaptic clusters and postsynaptic densities"/>
</dbReference>
<dbReference type="ChiTaRS" id="VAMP3">
    <property type="organism name" value="human"/>
</dbReference>
<dbReference type="GeneWiki" id="VAMP3"/>
<dbReference type="GenomeRNAi" id="9341"/>
<dbReference type="Pharos" id="Q15836">
    <property type="development level" value="Tbio"/>
</dbReference>
<dbReference type="PRO" id="PR:Q15836"/>
<dbReference type="Proteomes" id="UP000005640">
    <property type="component" value="Chromosome 1"/>
</dbReference>
<dbReference type="RNAct" id="Q15836">
    <property type="molecule type" value="protein"/>
</dbReference>
<dbReference type="Bgee" id="ENSG00000049245">
    <property type="expression patterns" value="Expressed in inferior olivary complex and 210 other cell types or tissues"/>
</dbReference>
<dbReference type="ExpressionAtlas" id="Q15836">
    <property type="expression patterns" value="baseline and differential"/>
</dbReference>
<dbReference type="GO" id="GO:0009986">
    <property type="term" value="C:cell surface"/>
    <property type="evidence" value="ECO:0007669"/>
    <property type="project" value="Ensembl"/>
</dbReference>
<dbReference type="GO" id="GO:0030669">
    <property type="term" value="C:clathrin-coated endocytic vesicle membrane"/>
    <property type="evidence" value="ECO:0000304"/>
    <property type="project" value="Reactome"/>
</dbReference>
<dbReference type="GO" id="GO:0030136">
    <property type="term" value="C:clathrin-coated vesicle"/>
    <property type="evidence" value="ECO:0000314"/>
    <property type="project" value="UniProtKB"/>
</dbReference>
<dbReference type="GO" id="GO:0005829">
    <property type="term" value="C:cytosol"/>
    <property type="evidence" value="ECO:0000314"/>
    <property type="project" value="UniProtKB"/>
</dbReference>
<dbReference type="GO" id="GO:0031901">
    <property type="term" value="C:early endosome membrane"/>
    <property type="evidence" value="ECO:0007669"/>
    <property type="project" value="UniProtKB-SubCell"/>
</dbReference>
<dbReference type="GO" id="GO:0043231">
    <property type="term" value="C:intracellular membrane-bounded organelle"/>
    <property type="evidence" value="ECO:0000314"/>
    <property type="project" value="UniProtKB"/>
</dbReference>
<dbReference type="GO" id="GO:0016020">
    <property type="term" value="C:membrane"/>
    <property type="evidence" value="ECO:0000304"/>
    <property type="project" value="ProtInc"/>
</dbReference>
<dbReference type="GO" id="GO:0043005">
    <property type="term" value="C:neuron projection"/>
    <property type="evidence" value="ECO:0007669"/>
    <property type="project" value="UniProtKB-KW"/>
</dbReference>
<dbReference type="GO" id="GO:0048471">
    <property type="term" value="C:perinuclear region of cytoplasm"/>
    <property type="evidence" value="ECO:0007669"/>
    <property type="project" value="Ensembl"/>
</dbReference>
<dbReference type="GO" id="GO:0030670">
    <property type="term" value="C:phagocytic vesicle membrane"/>
    <property type="evidence" value="ECO:0000304"/>
    <property type="project" value="Reactome"/>
</dbReference>
<dbReference type="GO" id="GO:0005886">
    <property type="term" value="C:plasma membrane"/>
    <property type="evidence" value="ECO:0000250"/>
    <property type="project" value="UniProtKB"/>
</dbReference>
<dbReference type="GO" id="GO:0055037">
    <property type="term" value="C:recycling endosome"/>
    <property type="evidence" value="ECO:0000314"/>
    <property type="project" value="MGI"/>
</dbReference>
<dbReference type="GO" id="GO:0055038">
    <property type="term" value="C:recycling endosome membrane"/>
    <property type="evidence" value="ECO:0000304"/>
    <property type="project" value="Reactome"/>
</dbReference>
<dbReference type="GO" id="GO:0030141">
    <property type="term" value="C:secretory granule"/>
    <property type="evidence" value="ECO:0007669"/>
    <property type="project" value="Ensembl"/>
</dbReference>
<dbReference type="GO" id="GO:0031201">
    <property type="term" value="C:SNARE complex"/>
    <property type="evidence" value="ECO:0000314"/>
    <property type="project" value="UniProtKB"/>
</dbReference>
<dbReference type="GO" id="GO:0045202">
    <property type="term" value="C:synapse"/>
    <property type="evidence" value="ECO:0007669"/>
    <property type="project" value="UniProtKB-SubCell"/>
</dbReference>
<dbReference type="GO" id="GO:0032588">
    <property type="term" value="C:trans-Golgi network membrane"/>
    <property type="evidence" value="ECO:0000304"/>
    <property type="project" value="Reactome"/>
</dbReference>
<dbReference type="GO" id="GO:0030133">
    <property type="term" value="C:transport vesicle"/>
    <property type="evidence" value="ECO:0000304"/>
    <property type="project" value="Reactome"/>
</dbReference>
<dbReference type="GO" id="GO:0005484">
    <property type="term" value="F:SNAP receptor activity"/>
    <property type="evidence" value="ECO:0000318"/>
    <property type="project" value="GO_Central"/>
</dbReference>
<dbReference type="GO" id="GO:0017075">
    <property type="term" value="F:syntaxin-1 binding"/>
    <property type="evidence" value="ECO:0000318"/>
    <property type="project" value="GO_Central"/>
</dbReference>
<dbReference type="GO" id="GO:0017156">
    <property type="term" value="P:calcium-ion regulated exocytosis"/>
    <property type="evidence" value="ECO:0007669"/>
    <property type="project" value="Ensembl"/>
</dbReference>
<dbReference type="GO" id="GO:0071346">
    <property type="term" value="P:cellular response to type II interferon"/>
    <property type="evidence" value="ECO:0007669"/>
    <property type="project" value="Ensembl"/>
</dbReference>
<dbReference type="GO" id="GO:0006887">
    <property type="term" value="P:exocytosis"/>
    <property type="evidence" value="ECO:0000304"/>
    <property type="project" value="ProtInc"/>
</dbReference>
<dbReference type="GO" id="GO:0043001">
    <property type="term" value="P:Golgi to plasma membrane protein transport"/>
    <property type="evidence" value="ECO:0007669"/>
    <property type="project" value="Ensembl"/>
</dbReference>
<dbReference type="GO" id="GO:0061025">
    <property type="term" value="P:membrane fusion"/>
    <property type="evidence" value="ECO:0000304"/>
    <property type="project" value="ProtInc"/>
</dbReference>
<dbReference type="GO" id="GO:1903531">
    <property type="term" value="P:negative regulation of secretion by cell"/>
    <property type="evidence" value="ECO:0000314"/>
    <property type="project" value="UniProtKB"/>
</dbReference>
<dbReference type="GO" id="GO:0001921">
    <property type="term" value="P:positive regulation of receptor recycling"/>
    <property type="evidence" value="ECO:0000250"/>
    <property type="project" value="UniProtKB"/>
</dbReference>
<dbReference type="GO" id="GO:0065003">
    <property type="term" value="P:protein-containing complex assembly"/>
    <property type="evidence" value="ECO:0000304"/>
    <property type="project" value="ProtInc"/>
</dbReference>
<dbReference type="GO" id="GO:0042147">
    <property type="term" value="P:retrograde transport, endosome to Golgi"/>
    <property type="evidence" value="ECO:0000314"/>
    <property type="project" value="UniProtKB"/>
</dbReference>
<dbReference type="GO" id="GO:0035493">
    <property type="term" value="P:SNARE complex assembly"/>
    <property type="evidence" value="ECO:0000318"/>
    <property type="project" value="GO_Central"/>
</dbReference>
<dbReference type="GO" id="GO:0034446">
    <property type="term" value="P:substrate adhesion-dependent cell spreading"/>
    <property type="evidence" value="ECO:0000250"/>
    <property type="project" value="UniProtKB"/>
</dbReference>
<dbReference type="GO" id="GO:0006904">
    <property type="term" value="P:vesicle docking involved in exocytosis"/>
    <property type="evidence" value="ECO:0000304"/>
    <property type="project" value="ProtInc"/>
</dbReference>
<dbReference type="GO" id="GO:0006906">
    <property type="term" value="P:vesicle fusion"/>
    <property type="evidence" value="ECO:0000318"/>
    <property type="project" value="GO_Central"/>
</dbReference>
<dbReference type="GO" id="GO:0016192">
    <property type="term" value="P:vesicle-mediated transport"/>
    <property type="evidence" value="ECO:0000250"/>
    <property type="project" value="UniProtKB"/>
</dbReference>
<dbReference type="CDD" id="cd15870">
    <property type="entry name" value="R-SNARE_VAMP2"/>
    <property type="match status" value="1"/>
</dbReference>
<dbReference type="FunFam" id="1.20.5.110:FF:000013">
    <property type="entry name" value="Vesicle-associated membrane protein 2"/>
    <property type="match status" value="1"/>
</dbReference>
<dbReference type="Gene3D" id="1.20.5.110">
    <property type="match status" value="1"/>
</dbReference>
<dbReference type="InterPro" id="IPR001388">
    <property type="entry name" value="Synaptobrevin-like"/>
</dbReference>
<dbReference type="InterPro" id="IPR016444">
    <property type="entry name" value="Synaptobrevin/VAMP"/>
</dbReference>
<dbReference type="InterPro" id="IPR042855">
    <property type="entry name" value="V_SNARE_CC"/>
</dbReference>
<dbReference type="PANTHER" id="PTHR45701">
    <property type="entry name" value="SYNAPTOBREVIN FAMILY MEMBER"/>
    <property type="match status" value="1"/>
</dbReference>
<dbReference type="Pfam" id="PF00957">
    <property type="entry name" value="Synaptobrevin"/>
    <property type="match status" value="1"/>
</dbReference>
<dbReference type="PIRSF" id="PIRSF005409">
    <property type="entry name" value="Synaptobrevin_euk"/>
    <property type="match status" value="1"/>
</dbReference>
<dbReference type="PRINTS" id="PR00219">
    <property type="entry name" value="SYNAPTOBREVN"/>
</dbReference>
<dbReference type="SUPFAM" id="SSF58038">
    <property type="entry name" value="SNARE fusion complex"/>
    <property type="match status" value="1"/>
</dbReference>
<dbReference type="PROSITE" id="PS00417">
    <property type="entry name" value="SYNAPTOBREVIN"/>
    <property type="match status" value="1"/>
</dbReference>
<dbReference type="PROSITE" id="PS50892">
    <property type="entry name" value="V_SNARE"/>
    <property type="match status" value="1"/>
</dbReference>
<name>VAMP3_HUMAN</name>
<protein>
    <recommendedName>
        <fullName>Vesicle-associated membrane protein 3</fullName>
        <shortName>VAMP-3</shortName>
    </recommendedName>
    <alternativeName>
        <fullName evidence="10">Cellubrevin</fullName>
        <shortName>CEB</shortName>
    </alternativeName>
    <alternativeName>
        <fullName>Synaptobrevin-3</fullName>
    </alternativeName>
</protein>
<gene>
    <name type="primary">VAMP3</name>
    <name type="synonym">SYB3</name>
</gene>